<comment type="function">
    <text evidence="1">Quinone reductase that provides resistance to thiol-specific stress caused by electrophilic quinones.</text>
</comment>
<comment type="function">
    <text evidence="1">Also exhibits azoreductase activity. Catalyzes the reductive cleavage of the azo bond in aromatic azo compounds to the corresponding amines.</text>
</comment>
<comment type="catalytic activity">
    <reaction evidence="1">
        <text>2 a quinone + NADH + H(+) = 2 a 1,4-benzosemiquinone + NAD(+)</text>
        <dbReference type="Rhea" id="RHEA:65952"/>
        <dbReference type="ChEBI" id="CHEBI:15378"/>
        <dbReference type="ChEBI" id="CHEBI:57540"/>
        <dbReference type="ChEBI" id="CHEBI:57945"/>
        <dbReference type="ChEBI" id="CHEBI:132124"/>
        <dbReference type="ChEBI" id="CHEBI:134225"/>
    </reaction>
</comment>
<comment type="catalytic activity">
    <reaction evidence="1">
        <text>N,N-dimethyl-1,4-phenylenediamine + anthranilate + 2 NAD(+) = 2-(4-dimethylaminophenyl)diazenylbenzoate + 2 NADH + 2 H(+)</text>
        <dbReference type="Rhea" id="RHEA:55872"/>
        <dbReference type="ChEBI" id="CHEBI:15378"/>
        <dbReference type="ChEBI" id="CHEBI:15783"/>
        <dbReference type="ChEBI" id="CHEBI:16567"/>
        <dbReference type="ChEBI" id="CHEBI:57540"/>
        <dbReference type="ChEBI" id="CHEBI:57945"/>
        <dbReference type="ChEBI" id="CHEBI:71579"/>
        <dbReference type="EC" id="1.7.1.17"/>
    </reaction>
</comment>
<comment type="cofactor">
    <cofactor evidence="1">
        <name>FMN</name>
        <dbReference type="ChEBI" id="CHEBI:58210"/>
    </cofactor>
    <text evidence="1">Binds 1 FMN per subunit.</text>
</comment>
<comment type="subunit">
    <text evidence="1">Homodimer.</text>
</comment>
<comment type="similarity">
    <text evidence="1">Belongs to the azoreductase type 1 family.</text>
</comment>
<feature type="chain" id="PRO_1000138987" description="FMN-dependent NADH:quinone oxidoreductase">
    <location>
        <begin position="1"/>
        <end position="204"/>
    </location>
</feature>
<feature type="binding site" evidence="1">
    <location>
        <position position="10"/>
    </location>
    <ligand>
        <name>FMN</name>
        <dbReference type="ChEBI" id="CHEBI:58210"/>
    </ligand>
</feature>
<feature type="binding site" evidence="1">
    <location>
        <begin position="15"/>
        <end position="17"/>
    </location>
    <ligand>
        <name>FMN</name>
        <dbReference type="ChEBI" id="CHEBI:58210"/>
    </ligand>
</feature>
<feature type="binding site" evidence="1">
    <location>
        <begin position="139"/>
        <end position="142"/>
    </location>
    <ligand>
        <name>FMN</name>
        <dbReference type="ChEBI" id="CHEBI:58210"/>
    </ligand>
</feature>
<dbReference type="EC" id="1.6.5.-" evidence="1"/>
<dbReference type="EC" id="1.7.1.17" evidence="1"/>
<dbReference type="EMBL" id="CP001191">
    <property type="protein sequence ID" value="ACI54721.1"/>
    <property type="molecule type" value="Genomic_DNA"/>
</dbReference>
<dbReference type="RefSeq" id="WP_012557432.1">
    <property type="nucleotide sequence ID" value="NC_011369.1"/>
</dbReference>
<dbReference type="SMR" id="B5ZZC8"/>
<dbReference type="STRING" id="395492.Rleg2_1427"/>
<dbReference type="KEGG" id="rlt:Rleg2_1427"/>
<dbReference type="eggNOG" id="COG1182">
    <property type="taxonomic scope" value="Bacteria"/>
</dbReference>
<dbReference type="HOGENOM" id="CLU_088964_0_0_5"/>
<dbReference type="Proteomes" id="UP000008330">
    <property type="component" value="Chromosome"/>
</dbReference>
<dbReference type="GO" id="GO:0009055">
    <property type="term" value="F:electron transfer activity"/>
    <property type="evidence" value="ECO:0007669"/>
    <property type="project" value="UniProtKB-UniRule"/>
</dbReference>
<dbReference type="GO" id="GO:0010181">
    <property type="term" value="F:FMN binding"/>
    <property type="evidence" value="ECO:0007669"/>
    <property type="project" value="UniProtKB-UniRule"/>
</dbReference>
<dbReference type="GO" id="GO:0016652">
    <property type="term" value="F:oxidoreductase activity, acting on NAD(P)H as acceptor"/>
    <property type="evidence" value="ECO:0007669"/>
    <property type="project" value="UniProtKB-UniRule"/>
</dbReference>
<dbReference type="GO" id="GO:0016655">
    <property type="term" value="F:oxidoreductase activity, acting on NAD(P)H, quinone or similar compound as acceptor"/>
    <property type="evidence" value="ECO:0007669"/>
    <property type="project" value="InterPro"/>
</dbReference>
<dbReference type="Gene3D" id="3.40.50.360">
    <property type="match status" value="1"/>
</dbReference>
<dbReference type="HAMAP" id="MF_01216">
    <property type="entry name" value="Azoreductase_type1"/>
    <property type="match status" value="1"/>
</dbReference>
<dbReference type="InterPro" id="IPR003680">
    <property type="entry name" value="Flavodoxin_fold"/>
</dbReference>
<dbReference type="InterPro" id="IPR029039">
    <property type="entry name" value="Flavoprotein-like_sf"/>
</dbReference>
<dbReference type="InterPro" id="IPR050104">
    <property type="entry name" value="FMN-dep_NADH:Q_OxRdtase_AzoR1"/>
</dbReference>
<dbReference type="InterPro" id="IPR023048">
    <property type="entry name" value="NADH:quinone_OxRdtase_FMN_depd"/>
</dbReference>
<dbReference type="PANTHER" id="PTHR43741">
    <property type="entry name" value="FMN-DEPENDENT NADH-AZOREDUCTASE 1"/>
    <property type="match status" value="1"/>
</dbReference>
<dbReference type="PANTHER" id="PTHR43741:SF2">
    <property type="entry name" value="FMN-DEPENDENT NADH:QUINONE OXIDOREDUCTASE"/>
    <property type="match status" value="1"/>
</dbReference>
<dbReference type="Pfam" id="PF02525">
    <property type="entry name" value="Flavodoxin_2"/>
    <property type="match status" value="1"/>
</dbReference>
<dbReference type="SUPFAM" id="SSF52218">
    <property type="entry name" value="Flavoproteins"/>
    <property type="match status" value="1"/>
</dbReference>
<organism>
    <name type="scientific">Rhizobium leguminosarum bv. trifolii (strain WSM2304)</name>
    <dbReference type="NCBI Taxonomy" id="395492"/>
    <lineage>
        <taxon>Bacteria</taxon>
        <taxon>Pseudomonadati</taxon>
        <taxon>Pseudomonadota</taxon>
        <taxon>Alphaproteobacteria</taxon>
        <taxon>Hyphomicrobiales</taxon>
        <taxon>Rhizobiaceae</taxon>
        <taxon>Rhizobium/Agrobacterium group</taxon>
        <taxon>Rhizobium</taxon>
    </lineage>
</organism>
<protein>
    <recommendedName>
        <fullName evidence="1">FMN-dependent NADH:quinone oxidoreductase</fullName>
        <ecNumber evidence="1">1.6.5.-</ecNumber>
    </recommendedName>
    <alternativeName>
        <fullName evidence="1">Azo-dye reductase</fullName>
    </alternativeName>
    <alternativeName>
        <fullName evidence="1">FMN-dependent NADH-azo compound oxidoreductase</fullName>
    </alternativeName>
    <alternativeName>
        <fullName evidence="1">FMN-dependent NADH-azoreductase</fullName>
        <ecNumber evidence="1">1.7.1.17</ecNumber>
    </alternativeName>
</protein>
<name>AZOR_RHILW</name>
<sequence>MSSILLLTSSPRAESLSTPIAVELAEKLKNQNPGSFLVRRDLAASPLPHIDDLFTGAIRKPAEARTAEEVAAVKTSDELVNELFAADTIVISTGLINFNIYSSLKTWIDNVARAGLTFKYTESGPVGLLTGKKVYVVLTSGGVYSQGPAAPLNHAVPYLKSVFGFLGITDIETIYVEGLAFGPEAAEKAIDAAKMRVQEIALAA</sequence>
<evidence type="ECO:0000255" key="1">
    <source>
        <dbReference type="HAMAP-Rule" id="MF_01216"/>
    </source>
</evidence>
<keyword id="KW-0285">Flavoprotein</keyword>
<keyword id="KW-0288">FMN</keyword>
<keyword id="KW-0520">NAD</keyword>
<keyword id="KW-0560">Oxidoreductase</keyword>
<keyword id="KW-1185">Reference proteome</keyword>
<gene>
    <name evidence="1" type="primary">azoR</name>
    <name type="ordered locus">Rleg2_1427</name>
</gene>
<accession>B5ZZC8</accession>
<reference key="1">
    <citation type="journal article" date="2010" name="Stand. Genomic Sci.">
        <title>Complete genome sequence of Rhizobium leguminosarum bv trifolii strain WSM2304, an effective microsymbiont of the South American clover Trifolium polymorphum.</title>
        <authorList>
            <person name="Reeve W."/>
            <person name="O'Hara G."/>
            <person name="Chain P."/>
            <person name="Ardley J."/>
            <person name="Brau L."/>
            <person name="Nandesena K."/>
            <person name="Tiwari R."/>
            <person name="Malfatti S."/>
            <person name="Kiss H."/>
            <person name="Lapidus A."/>
            <person name="Copeland A."/>
            <person name="Nolan M."/>
            <person name="Land M."/>
            <person name="Ivanova N."/>
            <person name="Mavromatis K."/>
            <person name="Markowitz V."/>
            <person name="Kyrpides N."/>
            <person name="Melino V."/>
            <person name="Denton M."/>
            <person name="Yates R."/>
            <person name="Howieson J."/>
        </authorList>
    </citation>
    <scope>NUCLEOTIDE SEQUENCE [LARGE SCALE GENOMIC DNA]</scope>
    <source>
        <strain>WSM2304</strain>
    </source>
</reference>
<proteinExistence type="inferred from homology"/>